<keyword id="KW-0067">ATP-binding</keyword>
<keyword id="KW-0414">Isoprene biosynthesis</keyword>
<keyword id="KW-0418">Kinase</keyword>
<keyword id="KW-0547">Nucleotide-binding</keyword>
<keyword id="KW-0808">Transferase</keyword>
<name>ISPE_CLOB1</name>
<protein>
    <recommendedName>
        <fullName evidence="1">4-diphosphocytidyl-2-C-methyl-D-erythritol kinase</fullName>
        <shortName evidence="1">CMK</shortName>
        <ecNumber evidence="1">2.7.1.148</ecNumber>
    </recommendedName>
    <alternativeName>
        <fullName evidence="1">4-(cytidine-5'-diphospho)-2-C-methyl-D-erythritol kinase</fullName>
    </alternativeName>
</protein>
<dbReference type="EC" id="2.7.1.148" evidence="1"/>
<dbReference type="EMBL" id="CP000726">
    <property type="protein sequence ID" value="ABS32598.1"/>
    <property type="molecule type" value="Genomic_DNA"/>
</dbReference>
<dbReference type="RefSeq" id="WP_011947969.1">
    <property type="nucleotide sequence ID" value="NC_009697.1"/>
</dbReference>
<dbReference type="SMR" id="A7FQF0"/>
<dbReference type="GeneID" id="5184376"/>
<dbReference type="KEGG" id="cba:CLB_0157"/>
<dbReference type="HOGENOM" id="CLU_053057_1_1_9"/>
<dbReference type="UniPathway" id="UPA00056">
    <property type="reaction ID" value="UER00094"/>
</dbReference>
<dbReference type="GO" id="GO:0050515">
    <property type="term" value="F:4-(cytidine 5'-diphospho)-2-C-methyl-D-erythritol kinase activity"/>
    <property type="evidence" value="ECO:0007669"/>
    <property type="project" value="UniProtKB-UniRule"/>
</dbReference>
<dbReference type="GO" id="GO:0005524">
    <property type="term" value="F:ATP binding"/>
    <property type="evidence" value="ECO:0007669"/>
    <property type="project" value="UniProtKB-UniRule"/>
</dbReference>
<dbReference type="GO" id="GO:0019288">
    <property type="term" value="P:isopentenyl diphosphate biosynthetic process, methylerythritol 4-phosphate pathway"/>
    <property type="evidence" value="ECO:0007669"/>
    <property type="project" value="UniProtKB-UniRule"/>
</dbReference>
<dbReference type="GO" id="GO:0016114">
    <property type="term" value="P:terpenoid biosynthetic process"/>
    <property type="evidence" value="ECO:0007669"/>
    <property type="project" value="InterPro"/>
</dbReference>
<dbReference type="FunFam" id="3.30.230.10:FF:000029">
    <property type="entry name" value="4-diphosphocytidyl-2-C-methyl-D-erythritol kinase"/>
    <property type="match status" value="1"/>
</dbReference>
<dbReference type="Gene3D" id="3.30.230.10">
    <property type="match status" value="1"/>
</dbReference>
<dbReference type="Gene3D" id="3.30.70.890">
    <property type="entry name" value="GHMP kinase, C-terminal domain"/>
    <property type="match status" value="1"/>
</dbReference>
<dbReference type="HAMAP" id="MF_00061">
    <property type="entry name" value="IspE"/>
    <property type="match status" value="1"/>
</dbReference>
<dbReference type="InterPro" id="IPR013750">
    <property type="entry name" value="GHMP_kinase_C_dom"/>
</dbReference>
<dbReference type="InterPro" id="IPR036554">
    <property type="entry name" value="GHMP_kinase_C_sf"/>
</dbReference>
<dbReference type="InterPro" id="IPR006204">
    <property type="entry name" value="GHMP_kinase_N_dom"/>
</dbReference>
<dbReference type="InterPro" id="IPR004424">
    <property type="entry name" value="IspE"/>
</dbReference>
<dbReference type="InterPro" id="IPR020568">
    <property type="entry name" value="Ribosomal_Su5_D2-typ_SF"/>
</dbReference>
<dbReference type="InterPro" id="IPR014721">
    <property type="entry name" value="Ribsml_uS5_D2-typ_fold_subgr"/>
</dbReference>
<dbReference type="NCBIfam" id="TIGR00154">
    <property type="entry name" value="ispE"/>
    <property type="match status" value="1"/>
</dbReference>
<dbReference type="PANTHER" id="PTHR43527">
    <property type="entry name" value="4-DIPHOSPHOCYTIDYL-2-C-METHYL-D-ERYTHRITOL KINASE, CHLOROPLASTIC"/>
    <property type="match status" value="1"/>
</dbReference>
<dbReference type="PANTHER" id="PTHR43527:SF2">
    <property type="entry name" value="4-DIPHOSPHOCYTIDYL-2-C-METHYL-D-ERYTHRITOL KINASE, CHLOROPLASTIC"/>
    <property type="match status" value="1"/>
</dbReference>
<dbReference type="Pfam" id="PF08544">
    <property type="entry name" value="GHMP_kinases_C"/>
    <property type="match status" value="1"/>
</dbReference>
<dbReference type="Pfam" id="PF00288">
    <property type="entry name" value="GHMP_kinases_N"/>
    <property type="match status" value="1"/>
</dbReference>
<dbReference type="PIRSF" id="PIRSF010376">
    <property type="entry name" value="IspE"/>
    <property type="match status" value="1"/>
</dbReference>
<dbReference type="SUPFAM" id="SSF55060">
    <property type="entry name" value="GHMP Kinase, C-terminal domain"/>
    <property type="match status" value="1"/>
</dbReference>
<dbReference type="SUPFAM" id="SSF54211">
    <property type="entry name" value="Ribosomal protein S5 domain 2-like"/>
    <property type="match status" value="1"/>
</dbReference>
<proteinExistence type="inferred from homology"/>
<feature type="chain" id="PRO_1000007832" description="4-diphosphocytidyl-2-C-methyl-D-erythritol kinase">
    <location>
        <begin position="1"/>
        <end position="280"/>
    </location>
</feature>
<feature type="active site" evidence="1">
    <location>
        <position position="8"/>
    </location>
</feature>
<feature type="active site" evidence="1">
    <location>
        <position position="133"/>
    </location>
</feature>
<feature type="binding site" evidence="1">
    <location>
        <begin position="91"/>
        <end position="101"/>
    </location>
    <ligand>
        <name>ATP</name>
        <dbReference type="ChEBI" id="CHEBI:30616"/>
    </ligand>
</feature>
<accession>A7FQF0</accession>
<organism>
    <name type="scientific">Clostridium botulinum (strain ATCC 19397 / Type A)</name>
    <dbReference type="NCBI Taxonomy" id="441770"/>
    <lineage>
        <taxon>Bacteria</taxon>
        <taxon>Bacillati</taxon>
        <taxon>Bacillota</taxon>
        <taxon>Clostridia</taxon>
        <taxon>Eubacteriales</taxon>
        <taxon>Clostridiaceae</taxon>
        <taxon>Clostridium</taxon>
    </lineage>
</organism>
<sequence length="280" mass="31520">MLSKAHAKINLSLDVIGKRKDGYHLLKMLMQTIDLYDLIEIKKIKKDIIIDCDREYIPKDRRNLAYKAATLFLDRYNIDSGVRINITKNIPVAAGLAGGSTDAATVLKIMRDIFEPDISNEELKEIALDIGADVPFCIEGGTALCEGIGEKITPIKNFKNHILVLVKPNFGLSTKDVYNNLKVEKIYIHPNTTKLIQSIEEDNLKSVARNMRNVLENVTLRKYKALNSIKSNFIELGALGSMMSGSGPSVFGLFDDMLKAQICYDNMREKYKEVFITRTI</sequence>
<evidence type="ECO:0000255" key="1">
    <source>
        <dbReference type="HAMAP-Rule" id="MF_00061"/>
    </source>
</evidence>
<gene>
    <name evidence="1" type="primary">ispE</name>
    <name type="ordered locus">CLB_0157</name>
</gene>
<comment type="function">
    <text evidence="1">Catalyzes the phosphorylation of the position 2 hydroxy group of 4-diphosphocytidyl-2C-methyl-D-erythritol.</text>
</comment>
<comment type="catalytic activity">
    <reaction evidence="1">
        <text>4-CDP-2-C-methyl-D-erythritol + ATP = 4-CDP-2-C-methyl-D-erythritol 2-phosphate + ADP + H(+)</text>
        <dbReference type="Rhea" id="RHEA:18437"/>
        <dbReference type="ChEBI" id="CHEBI:15378"/>
        <dbReference type="ChEBI" id="CHEBI:30616"/>
        <dbReference type="ChEBI" id="CHEBI:57823"/>
        <dbReference type="ChEBI" id="CHEBI:57919"/>
        <dbReference type="ChEBI" id="CHEBI:456216"/>
        <dbReference type="EC" id="2.7.1.148"/>
    </reaction>
</comment>
<comment type="pathway">
    <text evidence="1">Isoprenoid biosynthesis; isopentenyl diphosphate biosynthesis via DXP pathway; isopentenyl diphosphate from 1-deoxy-D-xylulose 5-phosphate: step 3/6.</text>
</comment>
<comment type="similarity">
    <text evidence="1">Belongs to the GHMP kinase family. IspE subfamily.</text>
</comment>
<reference key="1">
    <citation type="journal article" date="2007" name="PLoS ONE">
        <title>Analysis of the neurotoxin complex genes in Clostridium botulinum A1-A4 and B1 strains: BoNT/A3, /Ba4 and /B1 clusters are located within plasmids.</title>
        <authorList>
            <person name="Smith T.J."/>
            <person name="Hill K.K."/>
            <person name="Foley B.T."/>
            <person name="Detter J.C."/>
            <person name="Munk A.C."/>
            <person name="Bruce D.C."/>
            <person name="Doggett N.A."/>
            <person name="Smith L.A."/>
            <person name="Marks J.D."/>
            <person name="Xie G."/>
            <person name="Brettin T.S."/>
        </authorList>
    </citation>
    <scope>NUCLEOTIDE SEQUENCE [LARGE SCALE GENOMIC DNA]</scope>
    <source>
        <strain>ATCC 19397 / Type A</strain>
    </source>
</reference>